<name>RL1_STRPD</name>
<sequence>MAKKSKQMRAALEKVDSTKAYSVEEAVALVKETNFAKFDASVEVAYNLNIDVRKADQQIRGAMVLPNGTGKTQRVLVFARGAKAEEAKAAGADFVGEDDLVAKINGGWLDFDVVIATPDMMAIVGRLGRVLGPRNLMPNPKTGTVTMDVAKAVEESKGGKITYRADKAGNVQALIGKVSFDADKLVENFKAFHDVMAKAKPATAKGTYMANVSITSTQGVGIKVDPNSL</sequence>
<keyword id="KW-0678">Repressor</keyword>
<keyword id="KW-0687">Ribonucleoprotein</keyword>
<keyword id="KW-0689">Ribosomal protein</keyword>
<keyword id="KW-0694">RNA-binding</keyword>
<keyword id="KW-0699">rRNA-binding</keyword>
<keyword id="KW-0810">Translation regulation</keyword>
<keyword id="KW-0820">tRNA-binding</keyword>
<dbReference type="EMBL" id="CP000260">
    <property type="protein sequence ID" value="ABF33444.1"/>
    <property type="molecule type" value="Genomic_DNA"/>
</dbReference>
<dbReference type="RefSeq" id="WP_002985768.1">
    <property type="nucleotide sequence ID" value="NZ_CVUH01000002.1"/>
</dbReference>
<dbReference type="SMR" id="Q1JI79"/>
<dbReference type="KEGG" id="sph:MGAS10270_Spy0379"/>
<dbReference type="HOGENOM" id="CLU_062853_0_0_9"/>
<dbReference type="Proteomes" id="UP000002436">
    <property type="component" value="Chromosome"/>
</dbReference>
<dbReference type="GO" id="GO:0015934">
    <property type="term" value="C:large ribosomal subunit"/>
    <property type="evidence" value="ECO:0007669"/>
    <property type="project" value="InterPro"/>
</dbReference>
<dbReference type="GO" id="GO:0019843">
    <property type="term" value="F:rRNA binding"/>
    <property type="evidence" value="ECO:0007669"/>
    <property type="project" value="UniProtKB-UniRule"/>
</dbReference>
<dbReference type="GO" id="GO:0003735">
    <property type="term" value="F:structural constituent of ribosome"/>
    <property type="evidence" value="ECO:0007669"/>
    <property type="project" value="InterPro"/>
</dbReference>
<dbReference type="GO" id="GO:0000049">
    <property type="term" value="F:tRNA binding"/>
    <property type="evidence" value="ECO:0007669"/>
    <property type="project" value="UniProtKB-KW"/>
</dbReference>
<dbReference type="GO" id="GO:0006417">
    <property type="term" value="P:regulation of translation"/>
    <property type="evidence" value="ECO:0007669"/>
    <property type="project" value="UniProtKB-KW"/>
</dbReference>
<dbReference type="GO" id="GO:0006412">
    <property type="term" value="P:translation"/>
    <property type="evidence" value="ECO:0007669"/>
    <property type="project" value="UniProtKB-UniRule"/>
</dbReference>
<dbReference type="CDD" id="cd00403">
    <property type="entry name" value="Ribosomal_L1"/>
    <property type="match status" value="1"/>
</dbReference>
<dbReference type="FunFam" id="3.40.50.790:FF:000001">
    <property type="entry name" value="50S ribosomal protein L1"/>
    <property type="match status" value="1"/>
</dbReference>
<dbReference type="Gene3D" id="3.30.190.20">
    <property type="match status" value="1"/>
</dbReference>
<dbReference type="Gene3D" id="3.40.50.790">
    <property type="match status" value="1"/>
</dbReference>
<dbReference type="HAMAP" id="MF_01318_B">
    <property type="entry name" value="Ribosomal_uL1_B"/>
    <property type="match status" value="1"/>
</dbReference>
<dbReference type="InterPro" id="IPR005878">
    <property type="entry name" value="Ribosom_uL1_bac-type"/>
</dbReference>
<dbReference type="InterPro" id="IPR002143">
    <property type="entry name" value="Ribosomal_uL1"/>
</dbReference>
<dbReference type="InterPro" id="IPR023674">
    <property type="entry name" value="Ribosomal_uL1-like"/>
</dbReference>
<dbReference type="InterPro" id="IPR028364">
    <property type="entry name" value="Ribosomal_uL1/biogenesis"/>
</dbReference>
<dbReference type="InterPro" id="IPR016095">
    <property type="entry name" value="Ribosomal_uL1_3-a/b-sand"/>
</dbReference>
<dbReference type="InterPro" id="IPR023673">
    <property type="entry name" value="Ribosomal_uL1_CS"/>
</dbReference>
<dbReference type="NCBIfam" id="TIGR01169">
    <property type="entry name" value="rplA_bact"/>
    <property type="match status" value="1"/>
</dbReference>
<dbReference type="PANTHER" id="PTHR36427">
    <property type="entry name" value="54S RIBOSOMAL PROTEIN L1, MITOCHONDRIAL"/>
    <property type="match status" value="1"/>
</dbReference>
<dbReference type="PANTHER" id="PTHR36427:SF3">
    <property type="entry name" value="LARGE RIBOSOMAL SUBUNIT PROTEIN UL1M"/>
    <property type="match status" value="1"/>
</dbReference>
<dbReference type="Pfam" id="PF00687">
    <property type="entry name" value="Ribosomal_L1"/>
    <property type="match status" value="1"/>
</dbReference>
<dbReference type="PIRSF" id="PIRSF002155">
    <property type="entry name" value="Ribosomal_L1"/>
    <property type="match status" value="1"/>
</dbReference>
<dbReference type="SUPFAM" id="SSF56808">
    <property type="entry name" value="Ribosomal protein L1"/>
    <property type="match status" value="1"/>
</dbReference>
<dbReference type="PROSITE" id="PS01199">
    <property type="entry name" value="RIBOSOMAL_L1"/>
    <property type="match status" value="1"/>
</dbReference>
<gene>
    <name evidence="1" type="primary">rplA</name>
    <name type="ordered locus">MGAS10270_Spy0379</name>
</gene>
<comment type="function">
    <text evidence="1">Binds directly to 23S rRNA. The L1 stalk is quite mobile in the ribosome, and is involved in E site tRNA release.</text>
</comment>
<comment type="function">
    <text evidence="1">Protein L1 is also a translational repressor protein, it controls the translation of the L11 operon by binding to its mRNA.</text>
</comment>
<comment type="subunit">
    <text evidence="1">Part of the 50S ribosomal subunit.</text>
</comment>
<comment type="similarity">
    <text evidence="1">Belongs to the universal ribosomal protein uL1 family.</text>
</comment>
<protein>
    <recommendedName>
        <fullName evidence="1">Large ribosomal subunit protein uL1</fullName>
    </recommendedName>
    <alternativeName>
        <fullName evidence="2">50S ribosomal protein L1</fullName>
    </alternativeName>
</protein>
<feature type="chain" id="PRO_0000308116" description="Large ribosomal subunit protein uL1">
    <location>
        <begin position="1"/>
        <end position="229"/>
    </location>
</feature>
<proteinExistence type="inferred from homology"/>
<organism>
    <name type="scientific">Streptococcus pyogenes serotype M2 (strain MGAS10270)</name>
    <dbReference type="NCBI Taxonomy" id="370552"/>
    <lineage>
        <taxon>Bacteria</taxon>
        <taxon>Bacillati</taxon>
        <taxon>Bacillota</taxon>
        <taxon>Bacilli</taxon>
        <taxon>Lactobacillales</taxon>
        <taxon>Streptococcaceae</taxon>
        <taxon>Streptococcus</taxon>
    </lineage>
</organism>
<accession>Q1JI79</accession>
<evidence type="ECO:0000255" key="1">
    <source>
        <dbReference type="HAMAP-Rule" id="MF_01318"/>
    </source>
</evidence>
<evidence type="ECO:0000305" key="2"/>
<reference key="1">
    <citation type="journal article" date="2006" name="Proc. Natl. Acad. Sci. U.S.A.">
        <title>Molecular genetic anatomy of inter- and intraserotype variation in the human bacterial pathogen group A Streptococcus.</title>
        <authorList>
            <person name="Beres S.B."/>
            <person name="Richter E.W."/>
            <person name="Nagiec M.J."/>
            <person name="Sumby P."/>
            <person name="Porcella S.F."/>
            <person name="DeLeo F.R."/>
            <person name="Musser J.M."/>
        </authorList>
    </citation>
    <scope>NUCLEOTIDE SEQUENCE [LARGE SCALE GENOMIC DNA]</scope>
    <source>
        <strain>MGAS10270</strain>
    </source>
</reference>